<comment type="subcellular location">
    <subcellularLocation>
        <location evidence="1">Cell membrane</location>
        <topology evidence="1">Multi-pass membrane protein</topology>
    </subcellularLocation>
</comment>
<comment type="similarity">
    <text evidence="1">Belongs to the UPF0344 family.</text>
</comment>
<protein>
    <recommendedName>
        <fullName evidence="1">UPF0344 protein OB1184</fullName>
    </recommendedName>
</protein>
<keyword id="KW-1003">Cell membrane</keyword>
<keyword id="KW-0472">Membrane</keyword>
<keyword id="KW-1185">Reference proteome</keyword>
<keyword id="KW-0812">Transmembrane</keyword>
<keyword id="KW-1133">Transmembrane helix</keyword>
<dbReference type="EMBL" id="BA000028">
    <property type="protein sequence ID" value="BAC13140.1"/>
    <property type="molecule type" value="Genomic_DNA"/>
</dbReference>
<dbReference type="RefSeq" id="WP_011065583.1">
    <property type="nucleotide sequence ID" value="NC_004193.1"/>
</dbReference>
<dbReference type="SMR" id="Q8ERW3"/>
<dbReference type="STRING" id="221109.gene:10733423"/>
<dbReference type="KEGG" id="oih:OB1184"/>
<dbReference type="eggNOG" id="ENOG50335BE">
    <property type="taxonomic scope" value="Bacteria"/>
</dbReference>
<dbReference type="HOGENOM" id="CLU_146641_1_1_9"/>
<dbReference type="OrthoDB" id="2365314at2"/>
<dbReference type="Proteomes" id="UP000000822">
    <property type="component" value="Chromosome"/>
</dbReference>
<dbReference type="GO" id="GO:0005886">
    <property type="term" value="C:plasma membrane"/>
    <property type="evidence" value="ECO:0007669"/>
    <property type="project" value="UniProtKB-SubCell"/>
</dbReference>
<dbReference type="HAMAP" id="MF_01536">
    <property type="entry name" value="UPF0344"/>
    <property type="match status" value="1"/>
</dbReference>
<dbReference type="InterPro" id="IPR010899">
    <property type="entry name" value="UPF0344"/>
</dbReference>
<dbReference type="NCBIfam" id="NF010196">
    <property type="entry name" value="PRK13673.1-3"/>
    <property type="match status" value="1"/>
</dbReference>
<dbReference type="Pfam" id="PF07457">
    <property type="entry name" value="DUF1516"/>
    <property type="match status" value="1"/>
</dbReference>
<organism>
    <name type="scientific">Oceanobacillus iheyensis (strain DSM 14371 / CIP 107618 / JCM 11309 / KCTC 3954 / HTE831)</name>
    <dbReference type="NCBI Taxonomy" id="221109"/>
    <lineage>
        <taxon>Bacteria</taxon>
        <taxon>Bacillati</taxon>
        <taxon>Bacillota</taxon>
        <taxon>Bacilli</taxon>
        <taxon>Bacillales</taxon>
        <taxon>Bacillaceae</taxon>
        <taxon>Oceanobacillus</taxon>
    </lineage>
</organism>
<proteinExistence type="inferred from homology"/>
<name>Y1184_OCEIH</name>
<accession>Q8ERW3</accession>
<sequence>MTHMHITSWALGLILFIIALVMYKKGNQKPAKIIHMILRLMFILIIITGGILTWDYIQGYGMPILGEALVKALAGLWLVAMMEMILTGKAKGKPTTAKWVQFSIALVLVIVLGFFRLPMGFLFI</sequence>
<feature type="chain" id="PRO_0000105892" description="UPF0344 protein OB1184">
    <location>
        <begin position="1"/>
        <end position="124"/>
    </location>
</feature>
<feature type="transmembrane region" description="Helical" evidence="1">
    <location>
        <begin position="3"/>
        <end position="23"/>
    </location>
</feature>
<feature type="transmembrane region" description="Helical" evidence="1">
    <location>
        <begin position="33"/>
        <end position="53"/>
    </location>
</feature>
<feature type="transmembrane region" description="Helical" evidence="1">
    <location>
        <begin position="62"/>
        <end position="82"/>
    </location>
</feature>
<feature type="transmembrane region" description="Helical" evidence="1">
    <location>
        <begin position="104"/>
        <end position="124"/>
    </location>
</feature>
<reference key="1">
    <citation type="journal article" date="2002" name="Nucleic Acids Res.">
        <title>Genome sequence of Oceanobacillus iheyensis isolated from the Iheya Ridge and its unexpected adaptive capabilities to extreme environments.</title>
        <authorList>
            <person name="Takami H."/>
            <person name="Takaki Y."/>
            <person name="Uchiyama I."/>
        </authorList>
    </citation>
    <scope>NUCLEOTIDE SEQUENCE [LARGE SCALE GENOMIC DNA]</scope>
    <source>
        <strain>DSM 14371 / CIP 107618 / JCM 11309 / KCTC 3954 / HTE831</strain>
    </source>
</reference>
<evidence type="ECO:0000255" key="1">
    <source>
        <dbReference type="HAMAP-Rule" id="MF_01536"/>
    </source>
</evidence>
<gene>
    <name type="ordered locus">OB1184</name>
</gene>